<proteinExistence type="inferred from homology"/>
<name>CH60_STAA9</name>
<accession>A5IUH6</accession>
<organism>
    <name type="scientific">Staphylococcus aureus (strain JH9)</name>
    <dbReference type="NCBI Taxonomy" id="359786"/>
    <lineage>
        <taxon>Bacteria</taxon>
        <taxon>Bacillati</taxon>
        <taxon>Bacillota</taxon>
        <taxon>Bacilli</taxon>
        <taxon>Bacillales</taxon>
        <taxon>Staphylococcaceae</taxon>
        <taxon>Staphylococcus</taxon>
    </lineage>
</organism>
<evidence type="ECO:0000255" key="1">
    <source>
        <dbReference type="HAMAP-Rule" id="MF_00600"/>
    </source>
</evidence>
<sequence>MVKQLKFSEDARQAMLRGVDQLANAVKVTIGPKGRNVVLDKEFTAPLITNDGVTIAKEIELEDPYENMGAKLVQEVANKTNEIAGDGTTTATVLAQAMIQEGLKNVTSGANPVGLRQGIDKAVKVAVEALHENSQKVENKNEIAQVGAISAADEEIGRYISEAMEKVGNDGVITIEESNGLNTELEVVEGMQFDRGYQSPYMVTDSDKMVAELERPYILVTDKKISSFQDILPLLEQVVQSNRPILIVADEVEGDALTNIVLNRMRGTFTAVAVKAPGFGDRRKAMLEDLAILTGAQVITDDLGLDLKDASIDMLGTASKVEVTKDNTTVVDGDGDENSIDARVSQLKSQIEETESDFDREKLQERLAKLAGGVAVIKVGAASETELKERKLRIEDALNSTRAAVEEGIVAGGGTALVNVYQKVSEIEAEGDIETGVNIVLKALTAPVRQIAENAGLEGSVIVERLKNAEPGVGFNAATNEWVNMLEAGIVDPTKVTRSALQHAASVAAMFLTTEAVVASIPEKNNDQPNMGGMPGMM</sequence>
<feature type="chain" id="PRO_1000082492" description="Chaperonin GroEL">
    <location>
        <begin position="1"/>
        <end position="538"/>
    </location>
</feature>
<feature type="binding site" evidence="1">
    <location>
        <begin position="29"/>
        <end position="32"/>
    </location>
    <ligand>
        <name>ATP</name>
        <dbReference type="ChEBI" id="CHEBI:30616"/>
    </ligand>
</feature>
<feature type="binding site" evidence="1">
    <location>
        <begin position="86"/>
        <end position="90"/>
    </location>
    <ligand>
        <name>ATP</name>
        <dbReference type="ChEBI" id="CHEBI:30616"/>
    </ligand>
</feature>
<feature type="binding site" evidence="1">
    <location>
        <position position="413"/>
    </location>
    <ligand>
        <name>ATP</name>
        <dbReference type="ChEBI" id="CHEBI:30616"/>
    </ligand>
</feature>
<feature type="binding site" evidence="1">
    <location>
        <begin position="476"/>
        <end position="478"/>
    </location>
    <ligand>
        <name>ATP</name>
        <dbReference type="ChEBI" id="CHEBI:30616"/>
    </ligand>
</feature>
<feature type="binding site" evidence="1">
    <location>
        <position position="492"/>
    </location>
    <ligand>
        <name>ATP</name>
        <dbReference type="ChEBI" id="CHEBI:30616"/>
    </ligand>
</feature>
<dbReference type="EC" id="5.6.1.7" evidence="1"/>
<dbReference type="EMBL" id="CP000703">
    <property type="protein sequence ID" value="ABQ49849.1"/>
    <property type="molecule type" value="Genomic_DNA"/>
</dbReference>
<dbReference type="RefSeq" id="WP_000240642.1">
    <property type="nucleotide sequence ID" value="NC_009487.1"/>
</dbReference>
<dbReference type="SMR" id="A5IUH6"/>
<dbReference type="KEGG" id="saj:SaurJH9_2066"/>
<dbReference type="HOGENOM" id="CLU_016503_3_0_9"/>
<dbReference type="GO" id="GO:0005737">
    <property type="term" value="C:cytoplasm"/>
    <property type="evidence" value="ECO:0007669"/>
    <property type="project" value="UniProtKB-SubCell"/>
</dbReference>
<dbReference type="GO" id="GO:0005524">
    <property type="term" value="F:ATP binding"/>
    <property type="evidence" value="ECO:0007669"/>
    <property type="project" value="UniProtKB-UniRule"/>
</dbReference>
<dbReference type="GO" id="GO:0140662">
    <property type="term" value="F:ATP-dependent protein folding chaperone"/>
    <property type="evidence" value="ECO:0007669"/>
    <property type="project" value="InterPro"/>
</dbReference>
<dbReference type="GO" id="GO:0016853">
    <property type="term" value="F:isomerase activity"/>
    <property type="evidence" value="ECO:0007669"/>
    <property type="project" value="UniProtKB-KW"/>
</dbReference>
<dbReference type="GO" id="GO:0051082">
    <property type="term" value="F:unfolded protein binding"/>
    <property type="evidence" value="ECO:0007669"/>
    <property type="project" value="UniProtKB-UniRule"/>
</dbReference>
<dbReference type="GO" id="GO:0042026">
    <property type="term" value="P:protein refolding"/>
    <property type="evidence" value="ECO:0007669"/>
    <property type="project" value="UniProtKB-UniRule"/>
</dbReference>
<dbReference type="CDD" id="cd03344">
    <property type="entry name" value="GroEL"/>
    <property type="match status" value="1"/>
</dbReference>
<dbReference type="FunFam" id="1.10.560.10:FF:000001">
    <property type="entry name" value="60 kDa chaperonin"/>
    <property type="match status" value="1"/>
</dbReference>
<dbReference type="FunFam" id="3.50.7.10:FF:000001">
    <property type="entry name" value="60 kDa chaperonin"/>
    <property type="match status" value="1"/>
</dbReference>
<dbReference type="Gene3D" id="3.50.7.10">
    <property type="entry name" value="GroEL"/>
    <property type="match status" value="1"/>
</dbReference>
<dbReference type="Gene3D" id="1.10.560.10">
    <property type="entry name" value="GroEL-like equatorial domain"/>
    <property type="match status" value="1"/>
</dbReference>
<dbReference type="Gene3D" id="3.30.260.10">
    <property type="entry name" value="TCP-1-like chaperonin intermediate domain"/>
    <property type="match status" value="1"/>
</dbReference>
<dbReference type="HAMAP" id="MF_00600">
    <property type="entry name" value="CH60"/>
    <property type="match status" value="1"/>
</dbReference>
<dbReference type="InterPro" id="IPR018370">
    <property type="entry name" value="Chaperonin_Cpn60_CS"/>
</dbReference>
<dbReference type="InterPro" id="IPR001844">
    <property type="entry name" value="Cpn60/GroEL"/>
</dbReference>
<dbReference type="InterPro" id="IPR002423">
    <property type="entry name" value="Cpn60/GroEL/TCP-1"/>
</dbReference>
<dbReference type="InterPro" id="IPR027409">
    <property type="entry name" value="GroEL-like_apical_dom_sf"/>
</dbReference>
<dbReference type="InterPro" id="IPR027413">
    <property type="entry name" value="GROEL-like_equatorial_sf"/>
</dbReference>
<dbReference type="InterPro" id="IPR027410">
    <property type="entry name" value="TCP-1-like_intermed_sf"/>
</dbReference>
<dbReference type="NCBIfam" id="TIGR02348">
    <property type="entry name" value="GroEL"/>
    <property type="match status" value="1"/>
</dbReference>
<dbReference type="NCBIfam" id="NF000592">
    <property type="entry name" value="PRK00013.1"/>
    <property type="match status" value="1"/>
</dbReference>
<dbReference type="NCBIfam" id="NF009487">
    <property type="entry name" value="PRK12849.1"/>
    <property type="match status" value="1"/>
</dbReference>
<dbReference type="NCBIfam" id="NF009488">
    <property type="entry name" value="PRK12850.1"/>
    <property type="match status" value="1"/>
</dbReference>
<dbReference type="NCBIfam" id="NF009489">
    <property type="entry name" value="PRK12851.1"/>
    <property type="match status" value="1"/>
</dbReference>
<dbReference type="PANTHER" id="PTHR45633">
    <property type="entry name" value="60 KDA HEAT SHOCK PROTEIN, MITOCHONDRIAL"/>
    <property type="match status" value="1"/>
</dbReference>
<dbReference type="Pfam" id="PF00118">
    <property type="entry name" value="Cpn60_TCP1"/>
    <property type="match status" value="1"/>
</dbReference>
<dbReference type="PRINTS" id="PR00298">
    <property type="entry name" value="CHAPERONIN60"/>
</dbReference>
<dbReference type="SUPFAM" id="SSF52029">
    <property type="entry name" value="GroEL apical domain-like"/>
    <property type="match status" value="1"/>
</dbReference>
<dbReference type="SUPFAM" id="SSF48592">
    <property type="entry name" value="GroEL equatorial domain-like"/>
    <property type="match status" value="1"/>
</dbReference>
<dbReference type="SUPFAM" id="SSF54849">
    <property type="entry name" value="GroEL-intermediate domain like"/>
    <property type="match status" value="1"/>
</dbReference>
<dbReference type="PROSITE" id="PS00296">
    <property type="entry name" value="CHAPERONINS_CPN60"/>
    <property type="match status" value="1"/>
</dbReference>
<keyword id="KW-0067">ATP-binding</keyword>
<keyword id="KW-0143">Chaperone</keyword>
<keyword id="KW-0963">Cytoplasm</keyword>
<keyword id="KW-0413">Isomerase</keyword>
<keyword id="KW-0547">Nucleotide-binding</keyword>
<gene>
    <name evidence="1" type="primary">groEL</name>
    <name evidence="1" type="synonym">groL</name>
    <name type="ordered locus">SaurJH9_2066</name>
</gene>
<protein>
    <recommendedName>
        <fullName evidence="1">Chaperonin GroEL</fullName>
        <ecNumber evidence="1">5.6.1.7</ecNumber>
    </recommendedName>
    <alternativeName>
        <fullName evidence="1">60 kDa chaperonin</fullName>
    </alternativeName>
    <alternativeName>
        <fullName evidence="1">Chaperonin-60</fullName>
        <shortName evidence="1">Cpn60</shortName>
    </alternativeName>
</protein>
<comment type="function">
    <text evidence="1">Together with its co-chaperonin GroES, plays an essential role in assisting protein folding. The GroEL-GroES system forms a nano-cage that allows encapsulation of the non-native substrate proteins and provides a physical environment optimized to promote and accelerate protein folding.</text>
</comment>
<comment type="catalytic activity">
    <reaction evidence="1">
        <text>ATP + H2O + a folded polypeptide = ADP + phosphate + an unfolded polypeptide.</text>
        <dbReference type="EC" id="5.6.1.7"/>
    </reaction>
</comment>
<comment type="subunit">
    <text evidence="1">Forms a cylinder of 14 subunits composed of two heptameric rings stacked back-to-back. Interacts with the co-chaperonin GroES.</text>
</comment>
<comment type="subcellular location">
    <subcellularLocation>
        <location evidence="1">Cytoplasm</location>
    </subcellularLocation>
</comment>
<comment type="similarity">
    <text evidence="1">Belongs to the chaperonin (HSP60) family.</text>
</comment>
<reference key="1">
    <citation type="submission" date="2007-05" db="EMBL/GenBank/DDBJ databases">
        <title>Complete sequence of chromosome of Staphylococcus aureus subsp. aureus JH9.</title>
        <authorList>
            <consortium name="US DOE Joint Genome Institute"/>
            <person name="Copeland A."/>
            <person name="Lucas S."/>
            <person name="Lapidus A."/>
            <person name="Barry K."/>
            <person name="Detter J.C."/>
            <person name="Glavina del Rio T."/>
            <person name="Hammon N."/>
            <person name="Israni S."/>
            <person name="Pitluck S."/>
            <person name="Chain P."/>
            <person name="Malfatti S."/>
            <person name="Shin M."/>
            <person name="Vergez L."/>
            <person name="Schmutz J."/>
            <person name="Larimer F."/>
            <person name="Land M."/>
            <person name="Hauser L."/>
            <person name="Kyrpides N."/>
            <person name="Kim E."/>
            <person name="Tomasz A."/>
            <person name="Richardson P."/>
        </authorList>
    </citation>
    <scope>NUCLEOTIDE SEQUENCE [LARGE SCALE GENOMIC DNA]</scope>
    <source>
        <strain>JH9</strain>
    </source>
</reference>